<reference key="1">
    <citation type="journal article" date="2004" name="Genome Res.">
        <title>The status, quality, and expansion of the NIH full-length cDNA project: the Mammalian Gene Collection (MGC).</title>
        <authorList>
            <consortium name="The MGC Project Team"/>
        </authorList>
    </citation>
    <scope>NUCLEOTIDE SEQUENCE [LARGE SCALE MRNA]</scope>
    <source>
        <tissue>Testis</tissue>
    </source>
</reference>
<reference key="2">
    <citation type="journal article" date="2002" name="Biochem. Biophys. Res. Commun.">
        <title>Murine Apg12p has a substrate preference for murine Apg7p over three Apg8p homologs.</title>
        <authorList>
            <person name="Tanida I."/>
            <person name="Tanida-Miyake E."/>
            <person name="Nishitani T."/>
            <person name="Komatsu M."/>
            <person name="Yamazaki H."/>
            <person name="Ueno T."/>
            <person name="Kominami E."/>
        </authorList>
    </citation>
    <scope>TISSUE SPECIFICITY</scope>
</reference>
<reference key="3">
    <citation type="journal article" date="2013" name="J. Biol. Chem.">
        <title>Skeletal muscle-derived myonectin activates the mammalian target of rapamycin (mTOR) pathway to suppress autophagy in liver.</title>
        <authorList>
            <person name="Seldin M.M."/>
            <person name="Lei X."/>
            <person name="Tan S.Y."/>
            <person name="Stanson K.P."/>
            <person name="Wei Z."/>
            <person name="Wong G.W."/>
        </authorList>
    </citation>
    <scope>INDUCTION BY STARVATION</scope>
</reference>
<protein>
    <recommendedName>
        <fullName evidence="6">Ubiquitin-like modifier-activating enzyme ATG7</fullName>
    </recommendedName>
    <alternativeName>
        <fullName>ATG12-activating enzyme E1 ATG7</fullName>
    </alternativeName>
    <alternativeName>
        <fullName>Autophagy-related protein 7</fullName>
        <shortName>APG7-like</shortName>
    </alternativeName>
</protein>
<dbReference type="EMBL" id="BC082059">
    <property type="protein sequence ID" value="AAH82059.1"/>
    <property type="molecule type" value="mRNA"/>
</dbReference>
<dbReference type="RefSeq" id="NP_001012097.1">
    <property type="nucleotide sequence ID" value="NM_001012097.1"/>
</dbReference>
<dbReference type="RefSeq" id="XP_006237095.1">
    <property type="nucleotide sequence ID" value="XM_006237033.3"/>
</dbReference>
<dbReference type="RefSeq" id="XP_063142159.1">
    <property type="nucleotide sequence ID" value="XM_063286089.1"/>
</dbReference>
<dbReference type="SMR" id="Q641Y5"/>
<dbReference type="FunCoup" id="Q641Y5">
    <property type="interactions" value="2215"/>
</dbReference>
<dbReference type="STRING" id="10116.ENSRNOP00000063617"/>
<dbReference type="GlyGen" id="Q641Y5">
    <property type="glycosylation" value="1 site"/>
</dbReference>
<dbReference type="PhosphoSitePlus" id="Q641Y5"/>
<dbReference type="jPOST" id="Q641Y5"/>
<dbReference type="PaxDb" id="10116-ENSRNOP00000063617"/>
<dbReference type="GeneID" id="312647"/>
<dbReference type="KEGG" id="rno:312647"/>
<dbReference type="UCSC" id="RGD:1304817">
    <property type="organism name" value="rat"/>
</dbReference>
<dbReference type="AGR" id="RGD:1304817"/>
<dbReference type="CTD" id="10533"/>
<dbReference type="RGD" id="1304817">
    <property type="gene designation" value="Atg7"/>
</dbReference>
<dbReference type="VEuPathDB" id="HostDB:ENSRNOG00000007486"/>
<dbReference type="eggNOG" id="KOG2337">
    <property type="taxonomic scope" value="Eukaryota"/>
</dbReference>
<dbReference type="HOGENOM" id="CLU_012998_1_0_1"/>
<dbReference type="InParanoid" id="Q641Y5"/>
<dbReference type="PhylomeDB" id="Q641Y5"/>
<dbReference type="TreeFam" id="TF105689"/>
<dbReference type="Reactome" id="R-RNO-1632852">
    <property type="pathway name" value="Macroautophagy"/>
</dbReference>
<dbReference type="Reactome" id="R-RNO-6798695">
    <property type="pathway name" value="Neutrophil degranulation"/>
</dbReference>
<dbReference type="Reactome" id="R-RNO-983168">
    <property type="pathway name" value="Antigen processing: Ubiquitination &amp; Proteasome degradation"/>
</dbReference>
<dbReference type="PRO" id="PR:Q641Y5"/>
<dbReference type="Proteomes" id="UP000002494">
    <property type="component" value="Chromosome 4"/>
</dbReference>
<dbReference type="Bgee" id="ENSRNOG00000007486">
    <property type="expression patterns" value="Expressed in testis and 18 other cell types or tissues"/>
</dbReference>
<dbReference type="GO" id="GO:0030424">
    <property type="term" value="C:axon"/>
    <property type="evidence" value="ECO:0000314"/>
    <property type="project" value="RGD"/>
</dbReference>
<dbReference type="GO" id="GO:0005930">
    <property type="term" value="C:axoneme"/>
    <property type="evidence" value="ECO:0000250"/>
    <property type="project" value="UniProtKB"/>
</dbReference>
<dbReference type="GO" id="GO:0005737">
    <property type="term" value="C:cytoplasm"/>
    <property type="evidence" value="ECO:0000250"/>
    <property type="project" value="UniProtKB"/>
</dbReference>
<dbReference type="GO" id="GO:0098691">
    <property type="term" value="C:dopaminergic synapse"/>
    <property type="evidence" value="ECO:0000266"/>
    <property type="project" value="RGD"/>
</dbReference>
<dbReference type="GO" id="GO:0016020">
    <property type="term" value="C:membrane"/>
    <property type="evidence" value="ECO:0007669"/>
    <property type="project" value="GOC"/>
</dbReference>
<dbReference type="GO" id="GO:0048471">
    <property type="term" value="C:perinuclear region of cytoplasm"/>
    <property type="evidence" value="ECO:0000266"/>
    <property type="project" value="RGD"/>
</dbReference>
<dbReference type="GO" id="GO:0000407">
    <property type="term" value="C:phagophore assembly site"/>
    <property type="evidence" value="ECO:0000266"/>
    <property type="project" value="RGD"/>
</dbReference>
<dbReference type="GO" id="GO:0098793">
    <property type="term" value="C:presynapse"/>
    <property type="evidence" value="ECO:0007669"/>
    <property type="project" value="GOC"/>
</dbReference>
<dbReference type="GO" id="GO:0019778">
    <property type="term" value="F:Atg12 activating enzyme activity"/>
    <property type="evidence" value="ECO:0000250"/>
    <property type="project" value="UniProtKB"/>
</dbReference>
<dbReference type="GO" id="GO:0019779">
    <property type="term" value="F:Atg8 activating enzyme activity"/>
    <property type="evidence" value="ECO:0000266"/>
    <property type="project" value="RGD"/>
</dbReference>
<dbReference type="GO" id="GO:0042803">
    <property type="term" value="F:protein homodimerization activity"/>
    <property type="evidence" value="ECO:0000266"/>
    <property type="project" value="RGD"/>
</dbReference>
<dbReference type="GO" id="GO:0007628">
    <property type="term" value="P:adult walking behavior"/>
    <property type="evidence" value="ECO:0000266"/>
    <property type="project" value="RGD"/>
</dbReference>
<dbReference type="GO" id="GO:0006915">
    <property type="term" value="P:apoptotic process"/>
    <property type="evidence" value="ECO:0000266"/>
    <property type="project" value="RGD"/>
</dbReference>
<dbReference type="GO" id="GO:0000045">
    <property type="term" value="P:autophagosome assembly"/>
    <property type="evidence" value="ECO:0000266"/>
    <property type="project" value="RGD"/>
</dbReference>
<dbReference type="GO" id="GO:0006914">
    <property type="term" value="P:autophagy"/>
    <property type="evidence" value="ECO:0000250"/>
    <property type="project" value="UniProtKB"/>
</dbReference>
<dbReference type="GO" id="GO:0000422">
    <property type="term" value="P:autophagy of mitochondrion"/>
    <property type="evidence" value="ECO:0000266"/>
    <property type="project" value="RGD"/>
</dbReference>
<dbReference type="GO" id="GO:0010659">
    <property type="term" value="P:cardiac muscle cell apoptotic process"/>
    <property type="evidence" value="ECO:0000266"/>
    <property type="project" value="RGD"/>
</dbReference>
<dbReference type="GO" id="GO:0055013">
    <property type="term" value="P:cardiac muscle cell development"/>
    <property type="evidence" value="ECO:0000266"/>
    <property type="project" value="RGD"/>
</dbReference>
<dbReference type="GO" id="GO:0008283">
    <property type="term" value="P:cell population proliferation"/>
    <property type="evidence" value="ECO:0000315"/>
    <property type="project" value="RGD"/>
</dbReference>
<dbReference type="GO" id="GO:0071455">
    <property type="term" value="P:cellular response to hyperoxia"/>
    <property type="evidence" value="ECO:0000250"/>
    <property type="project" value="UniProtKB"/>
</dbReference>
<dbReference type="GO" id="GO:0071315">
    <property type="term" value="P:cellular response to morphine"/>
    <property type="evidence" value="ECO:0000270"/>
    <property type="project" value="RGD"/>
</dbReference>
<dbReference type="GO" id="GO:0006995">
    <property type="term" value="P:cellular response to nitrogen starvation"/>
    <property type="evidence" value="ECO:0000318"/>
    <property type="project" value="GO_Central"/>
</dbReference>
<dbReference type="GO" id="GO:0034614">
    <property type="term" value="P:cellular response to reactive oxygen species"/>
    <property type="evidence" value="ECO:0000266"/>
    <property type="project" value="RGD"/>
</dbReference>
<dbReference type="GO" id="GO:1903936">
    <property type="term" value="P:cellular response to sodium arsenite"/>
    <property type="evidence" value="ECO:0000315"/>
    <property type="project" value="RGD"/>
</dbReference>
<dbReference type="GO" id="GO:0009267">
    <property type="term" value="P:cellular response to starvation"/>
    <property type="evidence" value="ECO:0000250"/>
    <property type="project" value="UniProtKB"/>
</dbReference>
<dbReference type="GO" id="GO:0033554">
    <property type="term" value="P:cellular response to stress"/>
    <property type="evidence" value="ECO:0000266"/>
    <property type="project" value="RGD"/>
</dbReference>
<dbReference type="GO" id="GO:0021955">
    <property type="term" value="P:central nervous system neuron axonogenesis"/>
    <property type="evidence" value="ECO:0000266"/>
    <property type="project" value="RGD"/>
</dbReference>
<dbReference type="GO" id="GO:0021680">
    <property type="term" value="P:cerebellar Purkinje cell layer development"/>
    <property type="evidence" value="ECO:0000266"/>
    <property type="project" value="RGD"/>
</dbReference>
<dbReference type="GO" id="GO:0021987">
    <property type="term" value="P:cerebral cortex development"/>
    <property type="evidence" value="ECO:0000266"/>
    <property type="project" value="RGD"/>
</dbReference>
<dbReference type="GO" id="GO:0061684">
    <property type="term" value="P:chaperone-mediated autophagy"/>
    <property type="evidence" value="ECO:0000315"/>
    <property type="project" value="ARUK-UCL"/>
</dbReference>
<dbReference type="GO" id="GO:0006325">
    <property type="term" value="P:chromatin organization"/>
    <property type="evidence" value="ECO:0000266"/>
    <property type="project" value="RGD"/>
</dbReference>
<dbReference type="GO" id="GO:0007623">
    <property type="term" value="P:circadian rhythm"/>
    <property type="evidence" value="ECO:0000270"/>
    <property type="project" value="RGD"/>
</dbReference>
<dbReference type="GO" id="GO:0051607">
    <property type="term" value="P:defense response to virus"/>
    <property type="evidence" value="ECO:0000266"/>
    <property type="project" value="RGD"/>
</dbReference>
<dbReference type="GO" id="GO:0140059">
    <property type="term" value="P:dendrite arborization"/>
    <property type="evidence" value="ECO:0000315"/>
    <property type="project" value="RGD"/>
</dbReference>
<dbReference type="GO" id="GO:0051649">
    <property type="term" value="P:establishment of localization in cell"/>
    <property type="evidence" value="ECO:0000266"/>
    <property type="project" value="RGD"/>
</dbReference>
<dbReference type="GO" id="GO:0045087">
    <property type="term" value="P:innate immune response"/>
    <property type="evidence" value="ECO:0000266"/>
    <property type="project" value="RGD"/>
</dbReference>
<dbReference type="GO" id="GO:0035773">
    <property type="term" value="P:insulin secretion involved in cellular response to glucose stimulus"/>
    <property type="evidence" value="ECO:0000266"/>
    <property type="project" value="RGD"/>
</dbReference>
<dbReference type="GO" id="GO:0080144">
    <property type="term" value="P:intracellular amino acid homeostasis"/>
    <property type="evidence" value="ECO:0000266"/>
    <property type="project" value="RGD"/>
</dbReference>
<dbReference type="GO" id="GO:0090156">
    <property type="term" value="P:intracellular sphingolipid homeostasis"/>
    <property type="evidence" value="ECO:0000266"/>
    <property type="project" value="RGD"/>
</dbReference>
<dbReference type="GO" id="GO:0001889">
    <property type="term" value="P:liver development"/>
    <property type="evidence" value="ECO:0000266"/>
    <property type="project" value="RGD"/>
</dbReference>
<dbReference type="GO" id="GO:0016236">
    <property type="term" value="P:macroautophagy"/>
    <property type="evidence" value="ECO:0000266"/>
    <property type="project" value="RGD"/>
</dbReference>
<dbReference type="GO" id="GO:0061024">
    <property type="term" value="P:membrane organization"/>
    <property type="evidence" value="ECO:0000266"/>
    <property type="project" value="RGD"/>
</dbReference>
<dbReference type="GO" id="GO:0007005">
    <property type="term" value="P:mitochondrion organization"/>
    <property type="evidence" value="ECO:0000266"/>
    <property type="project" value="RGD"/>
</dbReference>
<dbReference type="GO" id="GO:0000423">
    <property type="term" value="P:mitophagy"/>
    <property type="evidence" value="ECO:0000266"/>
    <property type="project" value="RGD"/>
</dbReference>
<dbReference type="GO" id="GO:0070254">
    <property type="term" value="P:mucus secretion"/>
    <property type="evidence" value="ECO:0000266"/>
    <property type="project" value="RGD"/>
</dbReference>
<dbReference type="GO" id="GO:0043066">
    <property type="term" value="P:negative regulation of apoptotic process"/>
    <property type="evidence" value="ECO:0000315"/>
    <property type="project" value="RGD"/>
</dbReference>
<dbReference type="GO" id="GO:0010667">
    <property type="term" value="P:negative regulation of cardiac muscle cell apoptotic process"/>
    <property type="evidence" value="ECO:0000315"/>
    <property type="project" value="RGD"/>
</dbReference>
<dbReference type="GO" id="GO:1903860">
    <property type="term" value="P:negative regulation of dendrite extension"/>
    <property type="evidence" value="ECO:0000315"/>
    <property type="project" value="RGD"/>
</dbReference>
<dbReference type="GO" id="GO:0090298">
    <property type="term" value="P:negative regulation of mitochondrial DNA replication"/>
    <property type="evidence" value="ECO:0000315"/>
    <property type="project" value="RGD"/>
</dbReference>
<dbReference type="GO" id="GO:0043524">
    <property type="term" value="P:negative regulation of neuron apoptotic process"/>
    <property type="evidence" value="ECO:0000315"/>
    <property type="project" value="RGD"/>
</dbReference>
<dbReference type="GO" id="GO:0050765">
    <property type="term" value="P:negative regulation of phagocytosis"/>
    <property type="evidence" value="ECO:0000266"/>
    <property type="project" value="RGD"/>
</dbReference>
<dbReference type="GO" id="GO:0062099">
    <property type="term" value="P:negative regulation of programmed necrotic cell death"/>
    <property type="evidence" value="ECO:0000315"/>
    <property type="project" value="RGD"/>
</dbReference>
<dbReference type="GO" id="GO:0090155">
    <property type="term" value="P:negative regulation of sphingolipid biosynthetic process"/>
    <property type="evidence" value="ECO:0000266"/>
    <property type="project" value="RGD"/>
</dbReference>
<dbReference type="GO" id="GO:2000675">
    <property type="term" value="P:negative regulation of type B pancreatic cell apoptotic process"/>
    <property type="evidence" value="ECO:0000266"/>
    <property type="project" value="RGD"/>
</dbReference>
<dbReference type="GO" id="GO:0039689">
    <property type="term" value="P:negative stranded viral RNA replication"/>
    <property type="evidence" value="ECO:0000266"/>
    <property type="project" value="RGD"/>
</dbReference>
<dbReference type="GO" id="GO:0050877">
    <property type="term" value="P:nervous system process"/>
    <property type="evidence" value="ECO:0000266"/>
    <property type="project" value="RGD"/>
</dbReference>
<dbReference type="GO" id="GO:0031175">
    <property type="term" value="P:neuron projection development"/>
    <property type="evidence" value="ECO:0000266"/>
    <property type="project" value="RGD"/>
</dbReference>
<dbReference type="GO" id="GO:0034727">
    <property type="term" value="P:piecemeal microautophagy of the nucleus"/>
    <property type="evidence" value="ECO:0000318"/>
    <property type="project" value="GO_Central"/>
</dbReference>
<dbReference type="GO" id="GO:0043065">
    <property type="term" value="P:positive regulation of apoptotic process"/>
    <property type="evidence" value="ECO:0000250"/>
    <property type="project" value="UniProtKB"/>
</dbReference>
<dbReference type="GO" id="GO:2000786">
    <property type="term" value="P:positive regulation of autophagosome assembly"/>
    <property type="evidence" value="ECO:0000315"/>
    <property type="project" value="RGD"/>
</dbReference>
<dbReference type="GO" id="GO:0010508">
    <property type="term" value="P:positive regulation of autophagy"/>
    <property type="evidence" value="ECO:0000314"/>
    <property type="project" value="RGD"/>
</dbReference>
<dbReference type="GO" id="GO:0035774">
    <property type="term" value="P:positive regulation of insulin secretion involved in cellular response to glucose stimulus"/>
    <property type="evidence" value="ECO:0000266"/>
    <property type="project" value="RGD"/>
</dbReference>
<dbReference type="GO" id="GO:1901526">
    <property type="term" value="P:positive regulation of mitophagy"/>
    <property type="evidence" value="ECO:0000315"/>
    <property type="project" value="RGD"/>
</dbReference>
<dbReference type="GO" id="GO:0070257">
    <property type="term" value="P:positive regulation of mucus secretion"/>
    <property type="evidence" value="ECO:0000266"/>
    <property type="project" value="RGD"/>
</dbReference>
<dbReference type="GO" id="GO:0043068">
    <property type="term" value="P:positive regulation of programmed cell death"/>
    <property type="evidence" value="ECO:0000315"/>
    <property type="project" value="RGD"/>
</dbReference>
<dbReference type="GO" id="GO:0032436">
    <property type="term" value="P:positive regulation of proteasomal ubiquitin-dependent protein catabolic process"/>
    <property type="evidence" value="ECO:0000266"/>
    <property type="project" value="RGD"/>
</dbReference>
<dbReference type="GO" id="GO:0045732">
    <property type="term" value="P:positive regulation of protein catabolic process"/>
    <property type="evidence" value="ECO:0000250"/>
    <property type="project" value="UniProtKB"/>
</dbReference>
<dbReference type="GO" id="GO:0009791">
    <property type="term" value="P:post-embryonic development"/>
    <property type="evidence" value="ECO:0000266"/>
    <property type="project" value="RGD"/>
</dbReference>
<dbReference type="GO" id="GO:0030163">
    <property type="term" value="P:protein catabolic process"/>
    <property type="evidence" value="ECO:0000266"/>
    <property type="project" value="RGD"/>
</dbReference>
<dbReference type="GO" id="GO:0032446">
    <property type="term" value="P:protein modification by small protein conjugation"/>
    <property type="evidence" value="ECO:0000266"/>
    <property type="project" value="RGD"/>
</dbReference>
<dbReference type="GO" id="GO:0021860">
    <property type="term" value="P:pyramidal neuron development"/>
    <property type="evidence" value="ECO:0000266"/>
    <property type="project" value="RGD"/>
</dbReference>
<dbReference type="GO" id="GO:0060284">
    <property type="term" value="P:regulation of cell development"/>
    <property type="evidence" value="ECO:0000266"/>
    <property type="project" value="RGD"/>
</dbReference>
<dbReference type="GO" id="GO:0042752">
    <property type="term" value="P:regulation of circadian rhythm"/>
    <property type="evidence" value="ECO:0000250"/>
    <property type="project" value="UniProtKB"/>
</dbReference>
<dbReference type="GO" id="GO:1903706">
    <property type="term" value="P:regulation of hemopoiesis"/>
    <property type="evidence" value="ECO:0000266"/>
    <property type="project" value="RGD"/>
</dbReference>
<dbReference type="GO" id="GO:0031396">
    <property type="term" value="P:regulation of protein ubiquitination"/>
    <property type="evidence" value="ECO:0000266"/>
    <property type="project" value="RGD"/>
</dbReference>
<dbReference type="GO" id="GO:0097305">
    <property type="term" value="P:response to alcohol"/>
    <property type="evidence" value="ECO:0000270"/>
    <property type="project" value="RGD"/>
</dbReference>
<dbReference type="GO" id="GO:1902617">
    <property type="term" value="P:response to fluoride"/>
    <property type="evidence" value="ECO:0000270"/>
    <property type="project" value="RGD"/>
</dbReference>
<dbReference type="GO" id="GO:0009749">
    <property type="term" value="P:response to glucose"/>
    <property type="evidence" value="ECO:0000270"/>
    <property type="project" value="RGD"/>
</dbReference>
<dbReference type="GO" id="GO:0031667">
    <property type="term" value="P:response to nutrient levels"/>
    <property type="evidence" value="ECO:0000270"/>
    <property type="project" value="RGD"/>
</dbReference>
<dbReference type="GO" id="GO:0042594">
    <property type="term" value="P:response to starvation"/>
    <property type="evidence" value="ECO:0000266"/>
    <property type="project" value="RGD"/>
</dbReference>
<dbReference type="GO" id="GO:0030148">
    <property type="term" value="P:sphingolipid biosynthetic process"/>
    <property type="evidence" value="ECO:0000266"/>
    <property type="project" value="RGD"/>
</dbReference>
<dbReference type="GO" id="GO:0099504">
    <property type="term" value="P:synaptic vesicle cycle"/>
    <property type="evidence" value="ECO:0000266"/>
    <property type="project" value="RGD"/>
</dbReference>
<dbReference type="GO" id="GO:0097050">
    <property type="term" value="P:type B pancreatic cell apoptotic process"/>
    <property type="evidence" value="ECO:0000266"/>
    <property type="project" value="RGD"/>
</dbReference>
<dbReference type="CDD" id="cd01486">
    <property type="entry name" value="Apg7"/>
    <property type="match status" value="1"/>
</dbReference>
<dbReference type="FunFam" id="3.40.140.100:FF:000001">
    <property type="entry name" value="Ubiquitin-like modifier-activating enzyme ATG7"/>
    <property type="match status" value="1"/>
</dbReference>
<dbReference type="FunFam" id="3.40.50.720:FF:000156">
    <property type="entry name" value="Ubiquitin-like modifier-activating enzyme ATG7"/>
    <property type="match status" value="1"/>
</dbReference>
<dbReference type="FunFam" id="3.40.140.70:FF:000001">
    <property type="entry name" value="Ubiquitin-like modifier-activating enzyme atg7"/>
    <property type="match status" value="1"/>
</dbReference>
<dbReference type="Gene3D" id="3.40.50.720">
    <property type="entry name" value="NAD(P)-binding Rossmann-like Domain"/>
    <property type="match status" value="1"/>
</dbReference>
<dbReference type="Gene3D" id="3.40.140.100">
    <property type="entry name" value="Ubiquitin-like modifier-activating enzyme ATG7 C-terminal domain"/>
    <property type="match status" value="1"/>
</dbReference>
<dbReference type="Gene3D" id="3.40.140.70">
    <property type="entry name" value="Ubiquitin-like modifier-activating enzyme ATG7 N-terminal domain"/>
    <property type="match status" value="1"/>
</dbReference>
<dbReference type="InterPro" id="IPR006285">
    <property type="entry name" value="Atg7"/>
</dbReference>
<dbReference type="InterPro" id="IPR032197">
    <property type="entry name" value="Atg7_N"/>
</dbReference>
<dbReference type="InterPro" id="IPR042522">
    <property type="entry name" value="Atg7_N_1"/>
</dbReference>
<dbReference type="InterPro" id="IPR042523">
    <property type="entry name" value="Atg7_N_2"/>
</dbReference>
<dbReference type="InterPro" id="IPR045886">
    <property type="entry name" value="ThiF/MoeB/HesA"/>
</dbReference>
<dbReference type="InterPro" id="IPR000594">
    <property type="entry name" value="ThiF_NAD_FAD-bd"/>
</dbReference>
<dbReference type="InterPro" id="IPR035985">
    <property type="entry name" value="Ubiquitin-activating_enz"/>
</dbReference>
<dbReference type="NCBIfam" id="TIGR01381">
    <property type="entry name" value="E1_like_apg7"/>
    <property type="match status" value="1"/>
</dbReference>
<dbReference type="PANTHER" id="PTHR10953">
    <property type="entry name" value="UBIQUITIN-ACTIVATING ENZYME E1"/>
    <property type="match status" value="1"/>
</dbReference>
<dbReference type="PANTHER" id="PTHR10953:SF3">
    <property type="entry name" value="UBIQUITIN-LIKE MODIFIER-ACTIVATING ENZYME ATG7"/>
    <property type="match status" value="1"/>
</dbReference>
<dbReference type="Pfam" id="PF16420">
    <property type="entry name" value="ATG7_N"/>
    <property type="match status" value="1"/>
</dbReference>
<dbReference type="Pfam" id="PF00899">
    <property type="entry name" value="ThiF"/>
    <property type="match status" value="1"/>
</dbReference>
<dbReference type="SUPFAM" id="SSF69572">
    <property type="entry name" value="Activating enzymes of the ubiquitin-like proteins"/>
    <property type="match status" value="1"/>
</dbReference>
<feature type="chain" id="PRO_0000212808" description="Ubiquitin-like modifier-activating enzyme ATG7">
    <location>
        <begin position="1"/>
        <end position="698"/>
    </location>
</feature>
<feature type="short sequence motif" description="FAP motif">
    <location>
        <begin position="11"/>
        <end position="13"/>
    </location>
</feature>
<feature type="active site" description="Glycyl thioester intermediate" evidence="1">
    <location>
        <position position="567"/>
    </location>
</feature>
<feature type="modified residue" description="Phosphoserine" evidence="2">
    <location>
        <position position="693"/>
    </location>
</feature>
<feature type="cross-link" description="Glycyl lysine isopeptide (Lys-Gly) (interchain with G-Cter in ubiquitin)" evidence="2">
    <location>
        <position position="41"/>
    </location>
</feature>
<accession>Q641Y5</accession>
<comment type="function">
    <text evidence="2 3">E1-like activating enzyme involved in the 2 ubiquitin-like systems required for cytoplasm to vacuole transport (Cvt) and autophagy. Activates ATG12 for its conjugation with ATG5 as well as the ATG8 family proteins for their conjugation with phosphatidylethanolamine. Both systems are needed for the ATG8 association to Cvt vesicles and autophagosomes membranes. Required for autophagic death induced by caspase-8 inhibition. Facilitates LC3-I lipidation with phosphatidylethanolamine to form LC3-II which is found on autophagosomal membranes (By similarity). Required for mitophagy which contributes to regulate mitochondrial quantity and quality by eliminating the mitochondria to a basal level to fulfill cellular energy requirements and preventing excess ROS production. Modulates p53/TP53 activity to regulate cell cycle and survival during metabolic stress. Also plays a key role in the maintenance of axonal homeostasis, the prevention of axonal degeneration, the maintenance of hematopoietic stem cells, the formation of Paneth cell granules, as well as in adipose differentiation (By similarity). Plays a role in regulating the liver clock and glucose metabolism by mediating the autophagic degradation of CRY1 (clock repressor) in a time-dependent manner (By similarity).</text>
</comment>
<comment type="subunit">
    <text evidence="2 3">Homodimer. Interacts with ATG3; this interaction is essential for the transfer of ATG8-like proteins's thioester from ATG7 to ATG3 and plays a role in the conjugation of ATG12 to ATG5. Interacts with ATG12 (By similarity). Forms intermediate conjugates with GABARAPL1 (By similarity). Forms intermediate conjugates with ATG8-like proteins such as GABARAP, GABARAPL2 or MAP1LC3A. Interacts with EP300 acetyltransferase. Interacts with FOXO1 (By similarity).</text>
</comment>
<comment type="subcellular location">
    <subcellularLocation>
        <location evidence="1">Cytoplasm</location>
    </subcellularLocation>
    <subcellularLocation>
        <location evidence="1">Preautophagosomal structure</location>
    </subcellularLocation>
    <text evidence="1">Also localizes to discrete punctae along the ciliary axoneme and to the base of the ciliary axoneme.</text>
</comment>
<comment type="tissue specificity">
    <text evidence="4">Widely expressed.</text>
</comment>
<comment type="induction">
    <text evidence="5">Induced in liver hepatocytes by 24 hours of starvation.</text>
</comment>
<comment type="domain">
    <text evidence="1">The C-terminal part of the protein is essential for the dimerization and interaction with ATG3 and ATG12.</text>
</comment>
<comment type="domain">
    <text evidence="1">The N-terminal FAP motif (residues 11 to 13) is essential for the formation of the ATG89-PE and ATG5-ATG12 conjugates.</text>
</comment>
<comment type="PTM">
    <text evidence="1">Acetylated by EP300.</text>
</comment>
<comment type="PTM">
    <text evidence="2">Polyubiquitinated on Lys-41 via 'Lys-63'-linked ubiquitin by TRIM32; this modification positiely regulates ATG8 and ATG12 activating enzyme activity leading to initiation of autophagy under metabolic stress.</text>
</comment>
<comment type="similarity">
    <text evidence="6">Belongs to the ATG7 family.</text>
</comment>
<name>ATG7_RAT</name>
<evidence type="ECO:0000250" key="1"/>
<evidence type="ECO:0000250" key="2">
    <source>
        <dbReference type="UniProtKB" id="O95352"/>
    </source>
</evidence>
<evidence type="ECO:0000250" key="3">
    <source>
        <dbReference type="UniProtKB" id="Q9D906"/>
    </source>
</evidence>
<evidence type="ECO:0000269" key="4">
    <source>
    </source>
</evidence>
<evidence type="ECO:0000269" key="5">
    <source>
    </source>
</evidence>
<evidence type="ECO:0000305" key="6"/>
<evidence type="ECO:0000312" key="7">
    <source>
        <dbReference type="RGD" id="1304817"/>
    </source>
</evidence>
<keyword id="KW-0007">Acetylation</keyword>
<keyword id="KW-0072">Autophagy</keyword>
<keyword id="KW-0090">Biological rhythms</keyword>
<keyword id="KW-0963">Cytoplasm</keyword>
<keyword id="KW-1017">Isopeptide bond</keyword>
<keyword id="KW-0597">Phosphoprotein</keyword>
<keyword id="KW-0653">Protein transport</keyword>
<keyword id="KW-1185">Reference proteome</keyword>
<keyword id="KW-0813">Transport</keyword>
<keyword id="KW-0832">Ubl conjugation</keyword>
<keyword id="KW-0833">Ubl conjugation pathway</keyword>
<sequence>MGDPGLSKLQFAPFNSALDVGFWHELTQKKLNEYRLDEAPKDIKGYYYNGDSAGLPTRLTLEFSAFDMSAPTPARCCPAMGTLHNTNTLEAFKTADKKLLLEQSANEIWEAIKSGAALENPMLLNKFLLLTFADLKKYHFYYWFCCPALCLPESIPLIRGPVGLDQRLSPKQIQALEHAYDDLCRTEGVTALPYFLFKYDDDTVLVSLLKHYSDFFQGQRTKLTVGVYDPCNLTQHPGWPLRNFLVLAAHRWSGSFQSVEVLCFRDRTMQGARDVTHSIIFEVKLPEMAFSPDCPKAVGWEKNQKGGMGPRMVNLSGCMDPKRLAESSVDLNLKLMCWRLVPTLDLDKVVSVKCLLLGAGTLGCNVARTLMGWGVRHVTFVDNAKISYSNPVRQPLYEFEDCLGGGKPKALAAAERLQKIFPGVNASGFNMSIPMPGHPVNFSDVTMEQARRDVEQLEELIDSHDVIFLLMDTRESRWLPTVIAASKRKLVINAALGFDTFVVMRHGLKKPKQQGAGDLCPSHLVAPADLGSSLFANIPGYKLGCYFCNDVVAPGDSTRDRTLDQQCTVSRPGLAVIAGALAVELMVSVLQHPEGGYAIASSSDDRMNEPPTSLGLVPHQIRGFLSRFDNVLPVSLAFDKCTACSSKVLDQYEQEGFTFLAKVFNSSHSFLEDLTGLTLLHQETQAAEIWDMSDEETV</sequence>
<gene>
    <name evidence="7" type="primary">Atg7</name>
    <name type="synonym">Apg7l</name>
</gene>
<proteinExistence type="evidence at transcript level"/>
<organism>
    <name type="scientific">Rattus norvegicus</name>
    <name type="common">Rat</name>
    <dbReference type="NCBI Taxonomy" id="10116"/>
    <lineage>
        <taxon>Eukaryota</taxon>
        <taxon>Metazoa</taxon>
        <taxon>Chordata</taxon>
        <taxon>Craniata</taxon>
        <taxon>Vertebrata</taxon>
        <taxon>Euteleostomi</taxon>
        <taxon>Mammalia</taxon>
        <taxon>Eutheria</taxon>
        <taxon>Euarchontoglires</taxon>
        <taxon>Glires</taxon>
        <taxon>Rodentia</taxon>
        <taxon>Myomorpha</taxon>
        <taxon>Muroidea</taxon>
        <taxon>Muridae</taxon>
        <taxon>Murinae</taxon>
        <taxon>Rattus</taxon>
    </lineage>
</organism>